<evidence type="ECO:0000255" key="1">
    <source>
        <dbReference type="HAMAP-Rule" id="MF_00697"/>
    </source>
</evidence>
<gene>
    <name type="ordered locus">ABO_1518</name>
</gene>
<organism>
    <name type="scientific">Alcanivorax borkumensis (strain ATCC 700651 / DSM 11573 / NCIMB 13689 / SK2)</name>
    <dbReference type="NCBI Taxonomy" id="393595"/>
    <lineage>
        <taxon>Bacteria</taxon>
        <taxon>Pseudomonadati</taxon>
        <taxon>Pseudomonadota</taxon>
        <taxon>Gammaproteobacteria</taxon>
        <taxon>Oceanospirillales</taxon>
        <taxon>Alcanivoracaceae</taxon>
        <taxon>Alcanivorax</taxon>
    </lineage>
</organism>
<accession>Q0VPD2</accession>
<keyword id="KW-1185">Reference proteome</keyword>
<feature type="chain" id="PRO_1000045468" description="UPF0276 protein ABO_1518">
    <location>
        <begin position="1"/>
        <end position="299"/>
    </location>
</feature>
<reference key="1">
    <citation type="journal article" date="2006" name="Nat. Biotechnol.">
        <title>Genome sequence of the ubiquitous hydrocarbon-degrading marine bacterium Alcanivorax borkumensis.</title>
        <authorList>
            <person name="Schneiker S."/>
            <person name="Martins dos Santos V.A.P."/>
            <person name="Bartels D."/>
            <person name="Bekel T."/>
            <person name="Brecht M."/>
            <person name="Buhrmester J."/>
            <person name="Chernikova T.N."/>
            <person name="Denaro R."/>
            <person name="Ferrer M."/>
            <person name="Gertler C."/>
            <person name="Goesmann A."/>
            <person name="Golyshina O.V."/>
            <person name="Kaminski F."/>
            <person name="Khachane A.N."/>
            <person name="Lang S."/>
            <person name="Linke B."/>
            <person name="McHardy A.C."/>
            <person name="Meyer F."/>
            <person name="Nechitaylo T."/>
            <person name="Puehler A."/>
            <person name="Regenhardt D."/>
            <person name="Rupp O."/>
            <person name="Sabirova J.S."/>
            <person name="Selbitschka W."/>
            <person name="Yakimov M.M."/>
            <person name="Timmis K.N."/>
            <person name="Vorhoelter F.-J."/>
            <person name="Weidner S."/>
            <person name="Kaiser O."/>
            <person name="Golyshin P.N."/>
        </authorList>
    </citation>
    <scope>NUCLEOTIDE SEQUENCE [LARGE SCALE GENOMIC DNA]</scope>
    <source>
        <strain>ATCC 700651 / DSM 11573 / NCIMB 13689 / SK2</strain>
    </source>
</reference>
<comment type="similarity">
    <text evidence="1">Belongs to the UPF0276 family.</text>
</comment>
<dbReference type="EMBL" id="AM286690">
    <property type="protein sequence ID" value="CAL16966.1"/>
    <property type="molecule type" value="Genomic_DNA"/>
</dbReference>
<dbReference type="RefSeq" id="WP_011588799.1">
    <property type="nucleotide sequence ID" value="NC_008260.1"/>
</dbReference>
<dbReference type="SMR" id="Q0VPD2"/>
<dbReference type="STRING" id="393595.ABO_1518"/>
<dbReference type="KEGG" id="abo:ABO_1518"/>
<dbReference type="eggNOG" id="COG3220">
    <property type="taxonomic scope" value="Bacteria"/>
</dbReference>
<dbReference type="HOGENOM" id="CLU_064263_0_0_6"/>
<dbReference type="OrthoDB" id="9763101at2"/>
<dbReference type="Proteomes" id="UP000008871">
    <property type="component" value="Chromosome"/>
</dbReference>
<dbReference type="Gene3D" id="3.20.20.150">
    <property type="entry name" value="Divalent-metal-dependent TIM barrel enzymes"/>
    <property type="match status" value="1"/>
</dbReference>
<dbReference type="HAMAP" id="MF_00697">
    <property type="entry name" value="UPF0276"/>
    <property type="match status" value="1"/>
</dbReference>
<dbReference type="InterPro" id="IPR007801">
    <property type="entry name" value="MbnB/TglH/ChrH"/>
</dbReference>
<dbReference type="InterPro" id="IPR036237">
    <property type="entry name" value="Xyl_isomerase-like_sf"/>
</dbReference>
<dbReference type="NCBIfam" id="NF003818">
    <property type="entry name" value="PRK05409.1"/>
    <property type="match status" value="1"/>
</dbReference>
<dbReference type="PANTHER" id="PTHR42194">
    <property type="entry name" value="UPF0276 PROTEIN HI_1600"/>
    <property type="match status" value="1"/>
</dbReference>
<dbReference type="PANTHER" id="PTHR42194:SF1">
    <property type="entry name" value="UPF0276 PROTEIN HI_1600"/>
    <property type="match status" value="1"/>
</dbReference>
<dbReference type="Pfam" id="PF05114">
    <property type="entry name" value="MbnB_TglH_ChrH"/>
    <property type="match status" value="1"/>
</dbReference>
<dbReference type="SUPFAM" id="SSF51658">
    <property type="entry name" value="Xylose isomerase-like"/>
    <property type="match status" value="1"/>
</dbReference>
<protein>
    <recommendedName>
        <fullName evidence="1">UPF0276 protein ABO_1518</fullName>
    </recommendedName>
</protein>
<sequence>MKVETPVSGVGLGLRRALMGPLSQARDYAPESIPFDFMEVAPENWIPMGGRQGKEFRAFTERYPFVAHGLSLSLGGPEPLDFELLKSVKSFLKQHNIRRYTEHLSYCSDHGHLYDLMPIPFTQEAVYYVADRIRQVQDFLEQPIGIEHVSYYAQLGNAALGAQMSEIDFVNAVLKEANCELLLDVNNAYVNGINHGYDPLDFISALPGERICYLHIAGHFDEAEDLKVDTHGSDVIDPVWALLDHAYQTFGSLPTLLERDFNIPDNATLFAELRKIGGYQQLYPSAAIKSEDWQKPAQP</sequence>
<name>Y1518_ALCBS</name>
<proteinExistence type="inferred from homology"/>